<protein>
    <recommendedName>
        <fullName evidence="20">Regulator of nonsense transcripts 3B</fullName>
    </recommendedName>
    <alternativeName>
        <fullName evidence="20">Nonsense mRNA reducing factor 3B</fullName>
    </alternativeName>
    <alternativeName>
        <fullName evidence="1">Up-frameshift suppressor 3 homolog B</fullName>
        <shortName>hUpf3B</shortName>
    </alternativeName>
    <alternativeName>
        <fullName>Up-frameshift suppressor 3 homolog on chromosome X</fullName>
        <shortName>hUpf3p-X</shortName>
    </alternativeName>
</protein>
<name>REN3B_HUMAN</name>
<evidence type="ECO:0000250" key="1">
    <source>
        <dbReference type="UniProtKB" id="P48412"/>
    </source>
</evidence>
<evidence type="ECO:0000256" key="2">
    <source>
        <dbReference type="SAM" id="MobiDB-lite"/>
    </source>
</evidence>
<evidence type="ECO:0000269" key="3">
    <source>
    </source>
</evidence>
<evidence type="ECO:0000269" key="4">
    <source>
    </source>
</evidence>
<evidence type="ECO:0000269" key="5">
    <source>
    </source>
</evidence>
<evidence type="ECO:0000269" key="6">
    <source>
    </source>
</evidence>
<evidence type="ECO:0000269" key="7">
    <source>
    </source>
</evidence>
<evidence type="ECO:0000269" key="8">
    <source>
    </source>
</evidence>
<evidence type="ECO:0000269" key="9">
    <source>
    </source>
</evidence>
<evidence type="ECO:0000269" key="10">
    <source>
    </source>
</evidence>
<evidence type="ECO:0000269" key="11">
    <source>
    </source>
</evidence>
<evidence type="ECO:0000269" key="12">
    <source>
    </source>
</evidence>
<evidence type="ECO:0000269" key="13">
    <source>
    </source>
</evidence>
<evidence type="ECO:0000269" key="14">
    <source>
    </source>
</evidence>
<evidence type="ECO:0000269" key="15">
    <source>
    </source>
</evidence>
<evidence type="ECO:0000269" key="16">
    <source>
    </source>
</evidence>
<evidence type="ECO:0000303" key="17">
    <source>
    </source>
</evidence>
<evidence type="ECO:0000303" key="18">
    <source>
    </source>
</evidence>
<evidence type="ECO:0000305" key="19"/>
<evidence type="ECO:0000312" key="20">
    <source>
        <dbReference type="HGNC" id="HGNC:20439"/>
    </source>
</evidence>
<evidence type="ECO:0007744" key="21">
    <source>
    </source>
</evidence>
<evidence type="ECO:0007744" key="22">
    <source>
    </source>
</evidence>
<evidence type="ECO:0007744" key="23">
    <source>
    </source>
</evidence>
<evidence type="ECO:0007744" key="24">
    <source>
    </source>
</evidence>
<evidence type="ECO:0007744" key="25">
    <source>
    </source>
</evidence>
<evidence type="ECO:0007744" key="26">
    <source>
    </source>
</evidence>
<evidence type="ECO:0007829" key="27">
    <source>
        <dbReference type="PDB" id="1UW4"/>
    </source>
</evidence>
<evidence type="ECO:0007829" key="28">
    <source>
        <dbReference type="PDB" id="2XB2"/>
    </source>
</evidence>
<evidence type="ECO:0007829" key="29">
    <source>
        <dbReference type="PDB" id="7NWU"/>
    </source>
</evidence>
<sequence length="483" mass="57762">MKEEKEHRPKEKRVTLLTPAGATGSGGGTSGDSSKGEDKQDRNKEKKEALSKVVIRRLPPTLTKEQLQEHLQPMPEHDYFEFFSNDTSLYPHMYARAYINFKNQEDIILFRDRFDGYVFLDNKGQEYPAIVEFAPFQKAAKKKTKKRDTKVGTIDDDPEYRKFLESYATDNEKMTSTPETLLEEIEAKNRELIAKKTTPLLSFLKNKQRMREEKREERRRREIERKRQREEERRKWKEEEKRKRKDIEKLKKIDRIPERDKLKDEPKIKVHRFLLQAVNQKNLLKKPEKGDEKELDKREKAKKLDKENLSDERASGQSCTLPKRSDSELKDEKPKRPEDESGRDYREREREYERDQERILRERERLKRQEEERRRQKERYEKEKTFKRKEEEMKKEKDTLRDKGKKAESTESIGSSEKTEKKEEVVKRDRIRNKDRPAMQLYQPGARSRNRLCPPDDSTKSGDSAAERKQESGISHRKEGGEE</sequence>
<comment type="function">
    <text evidence="4 8 10 11 13">Involved in nonsense-mediated decay (NMD) of mRNAs containing premature stop codons by associating with the nuclear exon junction complex (EJC) and serving as link between the EJC core and NMD machinery. Recruits UPF2 at the cytoplasmic side of the nuclear envelope and the subsequent formation of an UPF1-UPF2-UPF3 surveillance complex (including UPF1 bound to release factors at the stalled ribosome) is believed to activate NMD. In cooperation with UPF2 stimulates both ATPase and RNA helicase activities of UPF1. Binds spliced mRNA upstream of exon-exon junctions. In vitro, stimulates translation; the function is independent of association with UPF2 and components of the EJC core.</text>
</comment>
<comment type="subunit">
    <text evidence="3 4 5 6 7 8 9 10 11 13 14 15 16">Found in a post-splicing messenger ribonucleoprotein (mRNP) complex. Core component of the mRNA splicing-dependent exon junction complex (EJC); the core complex contains CASC3, EIF4A3, MAGOH or MAGOHB, and RBM8A. The EJC core components EIF4A3 and the MAGOH-RBM8A dimer form a composite binding site for UPF3B which overlaps with the EJC binding site for WIBG (PubMed:16601204, PubMed:18066079, PubMed:20479275, PubMed:23917022). Interacts with EST1A, UPF2 and RBM8A (PubMed:12554878, PubMed:15004547, PubMed:18066079). Interacts with CPSF6 (PubMed:19864460). Interacts with DHX34; the interaction is RNA-independent.</text>
</comment>
<comment type="interaction">
    <interactant intactId="EBI-372780">
        <id>Q9BZI7</id>
    </interactant>
    <interactant intactId="EBI-299104">
        <id>P38919</id>
        <label>EIF4A3</label>
    </interactant>
    <organismsDiffer>false</organismsDiffer>
    <experiments>9</experiments>
</comment>
<comment type="interaction">
    <interactant intactId="EBI-372780">
        <id>Q9BZI7</id>
    </interactant>
    <interactant intactId="EBI-299134">
        <id>P61326</id>
        <label>MAGOH</label>
    </interactant>
    <organismsDiffer>false</organismsDiffer>
    <experiments>7</experiments>
</comment>
<comment type="interaction">
    <interactant intactId="EBI-372780">
        <id>Q9BZI7</id>
    </interactant>
    <interactant intactId="EBI-447231">
        <id>Q9Y5S9</id>
        <label>RBM8A</label>
    </interactant>
    <organismsDiffer>false</organismsDiffer>
    <experiments>9</experiments>
</comment>
<comment type="interaction">
    <interactant intactId="EBI-372780">
        <id>Q9BZI7</id>
    </interactant>
    <interactant intactId="EBI-373471">
        <id>Q92900</id>
        <label>UPF1</label>
    </interactant>
    <organismsDiffer>false</organismsDiffer>
    <experiments>11</experiments>
</comment>
<comment type="interaction">
    <interactant intactId="EBI-372780">
        <id>Q9BZI7</id>
    </interactant>
    <interactant intactId="EBI-372073">
        <id>Q9HAU5</id>
        <label>UPF2</label>
    </interactant>
    <organismsDiffer>false</organismsDiffer>
    <experiments>8</experiments>
</comment>
<comment type="interaction">
    <interactant intactId="EBI-15674130">
        <id>Q9BZI7-2</id>
    </interactant>
    <interactant intactId="EBI-299134">
        <id>P61326</id>
        <label>MAGOH</label>
    </interactant>
    <organismsDiffer>false</organismsDiffer>
    <experiments>2</experiments>
</comment>
<comment type="interaction">
    <interactant intactId="EBI-15674130">
        <id>Q9BZI7-2</id>
    </interactant>
    <interactant intactId="EBI-372073">
        <id>Q9HAU5</id>
        <label>UPF2</label>
    </interactant>
    <organismsDiffer>false</organismsDiffer>
    <experiments>7</experiments>
</comment>
<comment type="interaction">
    <interactant intactId="EBI-15674130">
        <id>Q9BZI7-2</id>
    </interactant>
    <interactant intactId="EBI-521530">
        <id>Q9H1J1</id>
        <label>UPF3A</label>
    </interactant>
    <organismsDiffer>false</organismsDiffer>
    <experiments>2</experiments>
</comment>
<comment type="subcellular location">
    <subcellularLocation>
        <location evidence="3 4">Nucleus</location>
    </subcellularLocation>
    <subcellularLocation>
        <location evidence="4">Cytoplasm</location>
    </subcellularLocation>
    <text evidence="4">Shuttling between the nucleus and the cytoplasm.</text>
</comment>
<comment type="alternative products">
    <event type="alternative splicing"/>
    <isoform>
        <id>Q9BZI7-1</id>
        <name>1</name>
        <sequence type="displayed"/>
    </isoform>
    <isoform>
        <id>Q9BZI7-2</id>
        <name>2</name>
        <sequence type="described" ref="VSP_012963"/>
    </isoform>
</comment>
<comment type="tissue specificity">
    <text evidence="3">Expressed in testis, uterus, prostate, heart, muscle, brain, spinal cord and placenta.</text>
</comment>
<comment type="disease" evidence="12">
    <disease id="DI-02460">
        <name>Intellectual developmental disorder, X-linked, syndromic 14</name>
        <acronym>MRXS14</acronym>
        <description>A disorder characterized by significantly below average general intellectual functioning associated with impairments in adaptive behavior and manifested during the developmental period. MRXS14 patients manifest intellectual disability associated with other variable signs such as autistic features, slender build, poor musculature, long, thin face, high-arched palate, high nasal bridge, and pectus deformities.</description>
        <dbReference type="MIM" id="300676"/>
    </disease>
    <text>The disease is caused by variants affecting the gene represented in this entry.</text>
</comment>
<comment type="similarity">
    <text evidence="19">Belongs to the RENT3 family.</text>
</comment>
<reference key="1">
    <citation type="journal article" date="2000" name="Cell">
        <title>Human Upf proteins target an mRNA for nonsense-mediated decay when bound downstream of a termination codon.</title>
        <authorList>
            <person name="Lykke-Andersen J."/>
            <person name="Shu M.-D."/>
            <person name="Steitz J.A."/>
        </authorList>
    </citation>
    <scope>NUCLEOTIDE SEQUENCE [MRNA] (ISOFORM 2)</scope>
    <scope>FUNCTION IN NONSENSE-MEDIATED MRNA DECAY</scope>
    <scope>INTERACTION WITH UPF1 AND UPF2</scope>
    <scope>SUBCELLULAR LOCATION</scope>
</reference>
<reference key="2">
    <citation type="journal article" date="2001" name="Mol. Cell. Biol.">
        <title>Identification and characterization of human orthologues to Saccharomyces cerevisiae Upf2 protein and Upf3 protein (Caenorhabditis elegans SMG-4).</title>
        <authorList>
            <person name="Serin G."/>
            <person name="Gersappe A."/>
            <person name="Black J.D."/>
            <person name="Aronoff R."/>
            <person name="Maquat L.E."/>
        </authorList>
    </citation>
    <scope>NUCLEOTIDE SEQUENCE [MRNA] (ISOFORM 1)</scope>
    <scope>INTERACTION WITH UPF2</scope>
    <scope>MUTAGENESIS OF 53-VAL--LEU-58 AND 117-TYR--PHE-119</scope>
    <scope>SUBCELLULAR LOCATION</scope>
    <scope>TISSUE SPECIFICITY</scope>
    <source>
        <tissue>Cervix carcinoma</tissue>
    </source>
</reference>
<reference key="3">
    <citation type="submission" date="2005-09" db="EMBL/GenBank/DDBJ databases">
        <authorList>
            <person name="Mural R.J."/>
            <person name="Istrail S."/>
            <person name="Sutton G.G."/>
            <person name="Florea L."/>
            <person name="Halpern A.L."/>
            <person name="Mobarry C.M."/>
            <person name="Lippert R."/>
            <person name="Walenz B."/>
            <person name="Shatkay H."/>
            <person name="Dew I."/>
            <person name="Miller J.R."/>
            <person name="Flanigan M.J."/>
            <person name="Edwards N.J."/>
            <person name="Bolanos R."/>
            <person name="Fasulo D."/>
            <person name="Halldorsson B.V."/>
            <person name="Hannenhalli S."/>
            <person name="Turner R."/>
            <person name="Yooseph S."/>
            <person name="Lu F."/>
            <person name="Nusskern D.R."/>
            <person name="Shue B.C."/>
            <person name="Zheng X.H."/>
            <person name="Zhong F."/>
            <person name="Delcher A.L."/>
            <person name="Huson D.H."/>
            <person name="Kravitz S.A."/>
            <person name="Mouchard L."/>
            <person name="Reinert K."/>
            <person name="Remington K.A."/>
            <person name="Clark A.G."/>
            <person name="Waterman M.S."/>
            <person name="Eichler E.E."/>
            <person name="Adams M.D."/>
            <person name="Hunkapiller M.W."/>
            <person name="Myers E.W."/>
            <person name="Venter J.C."/>
        </authorList>
    </citation>
    <scope>NUCLEOTIDE SEQUENCE [LARGE SCALE GENOMIC DNA]</scope>
</reference>
<reference key="4">
    <citation type="journal article" date="2004" name="Genome Res.">
        <title>The status, quality, and expansion of the NIH full-length cDNA project: the Mammalian Gene Collection (MGC).</title>
        <authorList>
            <consortium name="The MGC Project Team"/>
        </authorList>
    </citation>
    <scope>NUCLEOTIDE SEQUENCE [LARGE SCALE MRNA] (ISOFORM 2)</scope>
</reference>
<reference key="5">
    <citation type="journal article" date="2001" name="Science">
        <title>Role of the nonsense-mediated decay factor hUpf3 in the splicing-dependent exon-exon junction complex.</title>
        <authorList>
            <person name="Kim V.N."/>
            <person name="Kataoka N."/>
            <person name="Dreyfuss G."/>
        </authorList>
    </citation>
    <scope>INTERACTION WITH RBM8A</scope>
    <scope>IDENTIFICATION IN A POST-SPLICING MRNP COMPLEX</scope>
    <scope>ASSOCIATION WITH THE EJC COMPLEX</scope>
    <scope>RNA-BINDING</scope>
</reference>
<reference key="6">
    <citation type="journal article" date="2001" name="Science">
        <title>Communication of the position of exon-exon junctions to the mRNA surveillance machinery by the protein RNPS1.</title>
        <authorList>
            <person name="Lykke-Andersen J."/>
            <person name="Shu M.-D."/>
            <person name="Steitz J.A."/>
        </authorList>
    </citation>
    <scope>IDENTIFICATION IN A POST-SPLICING MRNP COMPLEX</scope>
    <scope>ASSOCIATION WITH THE EJC COMPLEX</scope>
</reference>
<reference key="7">
    <citation type="journal article" date="2003" name="Mol. Cell">
        <title>Y14 and hUpf3b form an NMD-activating complex.</title>
        <authorList>
            <person name="Gehring N.H."/>
            <person name="Neu-Yilik G."/>
            <person name="Schell T."/>
            <person name="Hentze M.W."/>
            <person name="Kulozik A.E."/>
        </authorList>
    </citation>
    <scope>FUNCTION IN NONSENSE-MEDIATED MRNA DECAY</scope>
    <scope>INTERACTION WITH RBM8A</scope>
    <scope>MUTAGENESIS OF ARG-430; ARG-432; 434-LYS--ARG-447; LYS-434; ASP-435; ARG-436 AND LEU-441</scope>
</reference>
<reference key="8">
    <citation type="journal article" date="2003" name="RNA">
        <title>Characterization of human Smg5/7a: a protein with similarities to Caenorhabditis elegans SMG5 and SMG7 that functions in the dephosphorylation of Upf1.</title>
        <authorList>
            <person name="Chiu S.-Y."/>
            <person name="Serin G."/>
            <person name="Ohara O."/>
            <person name="Maquat L.E."/>
        </authorList>
    </citation>
    <scope>INTERACTION WITH EST1A</scope>
</reference>
<reference key="9">
    <citation type="journal article" date="2005" name="Mol. Cell">
        <title>Exon-junction complex components specify distinct routes of nonsense-mediated mRNA decay with differential cofactor requirements.</title>
        <authorList>
            <person name="Gehring N.H."/>
            <person name="Kunz J.B."/>
            <person name="Neu-Yilik G."/>
            <person name="Breit S."/>
            <person name="Viegas M.H."/>
            <person name="Hentze M.W."/>
            <person name="Kulozik A.E."/>
        </authorList>
    </citation>
    <scope>FUNCTION IN NONSENSE-MEDIATED MRNA DECAY</scope>
    <scope>ASSOCIATION WITH THE EJC COMPLEX</scope>
    <scope>IDENTIFICATION IN A COMPLEX WITH UPF2 AND RNPS1</scope>
</reference>
<reference key="10">
    <citation type="journal article" date="2006" name="RNA">
        <title>Functions of hUpf3a and hUpf3b in nonsense-mediated mRNA decay and translation.</title>
        <authorList>
            <person name="Kunz J.B."/>
            <person name="Neu-Yilik G."/>
            <person name="Hentze M.W."/>
            <person name="Kulozik A.E."/>
            <person name="Gehring N.H."/>
        </authorList>
    </citation>
    <scope>FUNCTION IN NONSENSE-MEDIATED MRNA DECAY</scope>
    <scope>FUNCTION IN TRANSLATION STIMULATION</scope>
    <scope>ASSOCIATION WITH THE EJC COMPLEX</scope>
    <scope>MUTAGENESIS OF ARG-432</scope>
</reference>
<reference key="11">
    <citation type="journal article" date="2008" name="Nat. Struct. Mol. Biol.">
        <title>NMD factors UPF2 and UPF3 bridge UPF1 to the exon junction complex and stimulate its RNA helicase activity.</title>
        <authorList>
            <person name="Chamieh H."/>
            <person name="Ballut L."/>
            <person name="Bonneau F."/>
            <person name="Le Hir H."/>
        </authorList>
    </citation>
    <scope>FUNCTION</scope>
    <scope>RECONSTITUTION OF THE EJC CORE-UPF COMPLEX</scope>
</reference>
<reference key="12">
    <citation type="journal article" date="2008" name="Proc. Natl. Acad. Sci. U.S.A.">
        <title>A quantitative atlas of mitotic phosphorylation.</title>
        <authorList>
            <person name="Dephoure N."/>
            <person name="Zhou C."/>
            <person name="Villen J."/>
            <person name="Beausoleil S.A."/>
            <person name="Bakalarski C.E."/>
            <person name="Elledge S.J."/>
            <person name="Gygi S.P."/>
        </authorList>
    </citation>
    <scope>PHOSPHORYLATION [LARGE SCALE ANALYSIS] AT THR-169</scope>
    <scope>IDENTIFICATION BY MASS SPECTROMETRY [LARGE SCALE ANALYSIS]</scope>
    <source>
        <tissue>Cervix carcinoma</tissue>
    </source>
</reference>
<reference key="13">
    <citation type="journal article" date="2009" name="Mol. Biol. Cell">
        <title>Mammalian pre-mRNA 3' end processing factor CF I m 68 functions in mRNA export.</title>
        <authorList>
            <person name="Ruepp M.D."/>
            <person name="Aringhieri C."/>
            <person name="Vivarelli S."/>
            <person name="Cardinale S."/>
            <person name="Paro S."/>
            <person name="Schuemperli D."/>
            <person name="Barabino S.M."/>
        </authorList>
    </citation>
    <scope>INTERACTION WITH CPSF6</scope>
</reference>
<reference key="14">
    <citation type="journal article" date="2009" name="Sci. Signal.">
        <title>Quantitative phosphoproteomic analysis of T cell receptor signaling reveals system-wide modulation of protein-protein interactions.</title>
        <authorList>
            <person name="Mayya V."/>
            <person name="Lundgren D.H."/>
            <person name="Hwang S.-I."/>
            <person name="Rezaul K."/>
            <person name="Wu L."/>
            <person name="Eng J.K."/>
            <person name="Rodionov V."/>
            <person name="Han D.K."/>
        </authorList>
    </citation>
    <scope>PHOSPHORYLATION [LARGE SCALE ANALYSIS] AT THR-169</scope>
    <scope>IDENTIFICATION BY MASS SPECTROMETRY [LARGE SCALE ANALYSIS]</scope>
    <source>
        <tissue>Leukemic T-cell</tissue>
    </source>
</reference>
<reference key="15">
    <citation type="journal article" date="2010" name="Sci. Signal.">
        <title>Quantitative phosphoproteomics reveals widespread full phosphorylation site occupancy during mitosis.</title>
        <authorList>
            <person name="Olsen J.V."/>
            <person name="Vermeulen M."/>
            <person name="Santamaria A."/>
            <person name="Kumar C."/>
            <person name="Miller M.L."/>
            <person name="Jensen L.J."/>
            <person name="Gnad F."/>
            <person name="Cox J."/>
            <person name="Jensen T.S."/>
            <person name="Nigg E.A."/>
            <person name="Brunak S."/>
            <person name="Mann M."/>
        </authorList>
    </citation>
    <scope>PHOSPHORYLATION [LARGE SCALE ANALYSIS] AT THR-198</scope>
    <scope>IDENTIFICATION BY MASS SPECTROMETRY [LARGE SCALE ANALYSIS]</scope>
    <source>
        <tissue>Cervix carcinoma</tissue>
    </source>
</reference>
<reference key="16">
    <citation type="journal article" date="2011" name="BMC Syst. Biol.">
        <title>Initial characterization of the human central proteome.</title>
        <authorList>
            <person name="Burkard T.R."/>
            <person name="Planyavsky M."/>
            <person name="Kaupe I."/>
            <person name="Breitwieser F.P."/>
            <person name="Buerckstuemmer T."/>
            <person name="Bennett K.L."/>
            <person name="Superti-Furga G."/>
            <person name="Colinge J."/>
        </authorList>
    </citation>
    <scope>IDENTIFICATION BY MASS SPECTROMETRY [LARGE SCALE ANALYSIS]</scope>
</reference>
<reference key="17">
    <citation type="journal article" date="2011" name="Sci. Signal.">
        <title>System-wide temporal characterization of the proteome and phosphoproteome of human embryonic stem cell differentiation.</title>
        <authorList>
            <person name="Rigbolt K.T."/>
            <person name="Prokhorova T.A."/>
            <person name="Akimov V."/>
            <person name="Henningsen J."/>
            <person name="Johansen P.T."/>
            <person name="Kratchmarova I."/>
            <person name="Kassem M."/>
            <person name="Mann M."/>
            <person name="Olsen J.V."/>
            <person name="Blagoev B."/>
        </authorList>
    </citation>
    <scope>PHOSPHORYLATION [LARGE SCALE ANALYSIS] AT THR-169 AND SER-310</scope>
    <scope>IDENTIFICATION BY MASS SPECTROMETRY [LARGE SCALE ANALYSIS]</scope>
</reference>
<reference key="18">
    <citation type="journal article" date="2013" name="J. Proteome Res.">
        <title>Toward a comprehensive characterization of a human cancer cell phosphoproteome.</title>
        <authorList>
            <person name="Zhou H."/>
            <person name="Di Palma S."/>
            <person name="Preisinger C."/>
            <person name="Peng M."/>
            <person name="Polat A.N."/>
            <person name="Heck A.J."/>
            <person name="Mohammed S."/>
        </authorList>
    </citation>
    <scope>PHOSPHORYLATION [LARGE SCALE ANALYSIS] AT THR-169 AND SER-310</scope>
    <scope>IDENTIFICATION BY MASS SPECTROMETRY [LARGE SCALE ANALYSIS]</scope>
    <source>
        <tissue>Cervix carcinoma</tissue>
        <tissue>Erythroleukemia</tissue>
    </source>
</reference>
<reference key="19">
    <citation type="journal article" date="2013" name="RNA Biol.">
        <title>Two mammalian MAGOH genes contribute to exon junction complex composition and nonsense-mediated decay.</title>
        <authorList>
            <person name="Singh K.K."/>
            <person name="Wachsmuth L."/>
            <person name="Kulozik A.E."/>
            <person name="Gehring N.H."/>
        </authorList>
    </citation>
    <scope>IDENTIFICATION IN THE EXON JUNCTION COMPLEX</scope>
</reference>
<reference key="20">
    <citation type="journal article" date="2014" name="Cell Rep.">
        <title>The RNA helicase DHX34 activates NMD by promoting a transition from the surveillance to the decay-inducing complex.</title>
        <authorList>
            <person name="Hug N."/>
            <person name="Caceres J.F."/>
        </authorList>
    </citation>
    <scope>INTERACTION WITH DHX34</scope>
</reference>
<reference key="21">
    <citation type="journal article" date="2014" name="Mol. Cell. Proteomics">
        <title>Immunoaffinity enrichment and mass spectrometry analysis of protein methylation.</title>
        <authorList>
            <person name="Guo A."/>
            <person name="Gu H."/>
            <person name="Zhou J."/>
            <person name="Mulhern D."/>
            <person name="Wang Y."/>
            <person name="Lee K.A."/>
            <person name="Yang V."/>
            <person name="Aguiar M."/>
            <person name="Kornhauser J."/>
            <person name="Jia X."/>
            <person name="Ren J."/>
            <person name="Beausoleil S.A."/>
            <person name="Silva J.C."/>
            <person name="Vemulapalli V."/>
            <person name="Bedford M.T."/>
            <person name="Comb M.J."/>
        </authorList>
    </citation>
    <scope>METHYLATION [LARGE SCALE ANALYSIS] AT ARG-447</scope>
    <scope>IDENTIFICATION BY MASS SPECTROMETRY [LARGE SCALE ANALYSIS]</scope>
    <source>
        <tissue>Colon carcinoma</tissue>
    </source>
</reference>
<reference key="22">
    <citation type="journal article" date="2004" name="Nat. Struct. Mol. Biol.">
        <title>The structural basis for the interaction between nonsense-mediated mRNA decay factors UPF2 and UPF3.</title>
        <authorList>
            <person name="Kadlec J."/>
            <person name="Izaurralde E."/>
            <person name="Cusack S."/>
        </authorList>
    </citation>
    <scope>X-RAY CRYSTALLOGRAPHY (1.95 ANGSTROMS) OF 50-140 IN COMPLEX WITH UPF2</scope>
    <scope>RNA-BINDING</scope>
    <scope>MUTAGENESIS OF LYS-52 AND ARG-56</scope>
</reference>
<reference key="23">
    <citation type="journal article" date="2010" name="Proc. Natl. Acad. Sci. U.S.A.">
        <title>Insights into the recruitment of the NMD machinery from the crystal structure of a core EJC-UPF3b complex.</title>
        <authorList>
            <person name="Buchwald G."/>
            <person name="Ebert J."/>
            <person name="Basquin C."/>
            <person name="Sauliere J."/>
            <person name="Jayachandran U."/>
            <person name="Bono F."/>
            <person name="Le Hir H."/>
            <person name="Conti E."/>
        </authorList>
    </citation>
    <scope>X-RAY CRYSTALLOGRAPHY (3.4 ANGSTROMS) OF 424-483 IN COMPLEX WITH EIF4A3; MAGOH; RBM8A AND CASC3</scope>
    <scope>MUTAGENESIS OF ARG-436; TYR-442; ARG-447; ARG-449 AND ARG-451</scope>
</reference>
<reference key="24">
    <citation type="journal article" date="2007" name="Nat. Genet.">
        <title>Mutations in UPF3B, a member of the nonsense-mediated mRNA decay complex, cause syndromic and nonsyndromic mental retardation.</title>
        <authorList>
            <person name="Tarpey P.S."/>
            <person name="Raymond F.L."/>
            <person name="Nguyen L.S."/>
            <person name="Rodriguez J."/>
            <person name="Hackett A."/>
            <person name="Vandeleur L."/>
            <person name="Smith R."/>
            <person name="Shoubridge C."/>
            <person name="Edkins S."/>
            <person name="Stevens C."/>
            <person name="O'Meara S."/>
            <person name="Tofts C."/>
            <person name="Barthorpe S."/>
            <person name="Buck G."/>
            <person name="Cole J."/>
            <person name="Halliday K."/>
            <person name="Hills K."/>
            <person name="Jones D."/>
            <person name="Mironenko T."/>
            <person name="Perry J."/>
            <person name="Varian J."/>
            <person name="West S."/>
            <person name="Widaa S."/>
            <person name="Teague J."/>
            <person name="Dicks E."/>
            <person name="Butler A."/>
            <person name="Menzies A."/>
            <person name="Richardson D."/>
            <person name="Jenkinson A."/>
            <person name="Shepherd R."/>
            <person name="Raine K."/>
            <person name="Moon J."/>
            <person name="Luo Y."/>
            <person name="Parnau J."/>
            <person name="Bhat S.S."/>
            <person name="Gardner A."/>
            <person name="Corbett M."/>
            <person name="Brooks D."/>
            <person name="Thomas P."/>
            <person name="Parkinson-Lawrence E."/>
            <person name="Porteous M.E."/>
            <person name="Warner J.P."/>
            <person name="Sanderson T."/>
            <person name="Pearson P."/>
            <person name="Simensen R.J."/>
            <person name="Skinner C."/>
            <person name="Hoganson G."/>
            <person name="Superneau D."/>
            <person name="Wooster R."/>
            <person name="Bobrow M."/>
            <person name="Turner G."/>
            <person name="Stevenson R.E."/>
            <person name="Schwartz C.E."/>
            <person name="Futreal P.A."/>
            <person name="Srivastava A.K."/>
            <person name="Stratton M.R."/>
            <person name="Gecz J."/>
        </authorList>
    </citation>
    <scope>VARIANT MRXS14 ASP-160</scope>
</reference>
<keyword id="KW-0002">3D-structure</keyword>
<keyword id="KW-0025">Alternative splicing</keyword>
<keyword id="KW-0963">Cytoplasm</keyword>
<keyword id="KW-0225">Disease variant</keyword>
<keyword id="KW-0991">Intellectual disability</keyword>
<keyword id="KW-0488">Methylation</keyword>
<keyword id="KW-0509">mRNA transport</keyword>
<keyword id="KW-0866">Nonsense-mediated mRNA decay</keyword>
<keyword id="KW-0539">Nucleus</keyword>
<keyword id="KW-0597">Phosphoprotein</keyword>
<keyword id="KW-1267">Proteomics identification</keyword>
<keyword id="KW-1185">Reference proteome</keyword>
<keyword id="KW-0694">RNA-binding</keyword>
<keyword id="KW-0813">Transport</keyword>
<accession>Q9BZI7</accession>
<accession>D3DWI3</accession>
<accession>D3DWI4</accession>
<accession>Q0VAK8</accession>
<accession>Q9H1J0</accession>
<gene>
    <name evidence="20" type="primary">UPF3B</name>
    <name evidence="20" type="synonym">RENT3B</name>
    <name type="synonym">UPF3X</name>
</gene>
<dbReference type="EMBL" id="AY013251">
    <property type="protein sequence ID" value="AAG48511.1"/>
    <property type="molecule type" value="mRNA"/>
</dbReference>
<dbReference type="EMBL" id="AF318576">
    <property type="protein sequence ID" value="AAG60691.1"/>
    <property type="molecule type" value="mRNA"/>
</dbReference>
<dbReference type="EMBL" id="CH471161">
    <property type="protein sequence ID" value="EAW89842.1"/>
    <property type="molecule type" value="Genomic_DNA"/>
</dbReference>
<dbReference type="EMBL" id="CH471161">
    <property type="protein sequence ID" value="EAW89844.1"/>
    <property type="molecule type" value="Genomic_DNA"/>
</dbReference>
<dbReference type="EMBL" id="CH471161">
    <property type="protein sequence ID" value="EAW89845.1"/>
    <property type="molecule type" value="Genomic_DNA"/>
</dbReference>
<dbReference type="EMBL" id="CH471161">
    <property type="protein sequence ID" value="EAW89846.1"/>
    <property type="molecule type" value="Genomic_DNA"/>
</dbReference>
<dbReference type="EMBL" id="BC121017">
    <property type="protein sequence ID" value="AAI21018.1"/>
    <property type="molecule type" value="mRNA"/>
</dbReference>
<dbReference type="CCDS" id="CCDS14587.1">
    <molecule id="Q9BZI7-2"/>
</dbReference>
<dbReference type="CCDS" id="CCDS14588.1">
    <molecule id="Q9BZI7-1"/>
</dbReference>
<dbReference type="RefSeq" id="NP_075386.1">
    <molecule id="Q9BZI7-2"/>
    <property type="nucleotide sequence ID" value="NM_023010.4"/>
</dbReference>
<dbReference type="RefSeq" id="NP_542199.1">
    <molecule id="Q9BZI7-1"/>
    <property type="nucleotide sequence ID" value="NM_080632.3"/>
</dbReference>
<dbReference type="PDB" id="1UW4">
    <property type="method" value="X-ray"/>
    <property type="resolution" value="1.95 A"/>
    <property type="chains" value="A/C=50-140"/>
</dbReference>
<dbReference type="PDB" id="2XB2">
    <property type="method" value="X-ray"/>
    <property type="resolution" value="3.40 A"/>
    <property type="chains" value="G/U=424-483"/>
</dbReference>
<dbReference type="PDB" id="7NWU">
    <property type="method" value="X-ray"/>
    <property type="resolution" value="2.60 A"/>
    <property type="chains" value="A/C/E/G=49-170"/>
</dbReference>
<dbReference type="PDBsum" id="1UW4"/>
<dbReference type="PDBsum" id="2XB2"/>
<dbReference type="PDBsum" id="7NWU"/>
<dbReference type="SMR" id="Q9BZI7"/>
<dbReference type="BioGRID" id="122396">
    <property type="interactions" value="163"/>
</dbReference>
<dbReference type="CORUM" id="Q9BZI7"/>
<dbReference type="DIP" id="DIP-31143N"/>
<dbReference type="FunCoup" id="Q9BZI7">
    <property type="interactions" value="3445"/>
</dbReference>
<dbReference type="IntAct" id="Q9BZI7">
    <property type="interactions" value="41"/>
</dbReference>
<dbReference type="MINT" id="Q9BZI7"/>
<dbReference type="STRING" id="9606.ENSP00000276201"/>
<dbReference type="GlyGen" id="Q9BZI7">
    <property type="glycosylation" value="2 sites, 1 N-linked glycan (1 site), 1 O-linked glycan (1 site)"/>
</dbReference>
<dbReference type="iPTMnet" id="Q9BZI7"/>
<dbReference type="PhosphoSitePlus" id="Q9BZI7"/>
<dbReference type="BioMuta" id="UPF3B"/>
<dbReference type="DMDM" id="60390643"/>
<dbReference type="jPOST" id="Q9BZI7"/>
<dbReference type="MassIVE" id="Q9BZI7"/>
<dbReference type="PaxDb" id="9606-ENSP00000276201"/>
<dbReference type="PeptideAtlas" id="Q9BZI7"/>
<dbReference type="ProteomicsDB" id="79849">
    <molecule id="Q9BZI7-1"/>
</dbReference>
<dbReference type="ProteomicsDB" id="79850">
    <molecule id="Q9BZI7-2"/>
</dbReference>
<dbReference type="Pumba" id="Q9BZI7"/>
<dbReference type="Antibodypedia" id="464">
    <property type="antibodies" value="101 antibodies from 24 providers"/>
</dbReference>
<dbReference type="DNASU" id="65109"/>
<dbReference type="Ensembl" id="ENST00000276201.7">
    <molecule id="Q9BZI7-1"/>
    <property type="protein sequence ID" value="ENSP00000276201.3"/>
    <property type="gene ID" value="ENSG00000125351.14"/>
</dbReference>
<dbReference type="Ensembl" id="ENST00000345865.6">
    <molecule id="Q9BZI7-2"/>
    <property type="protein sequence ID" value="ENSP00000245418.2"/>
    <property type="gene ID" value="ENSG00000125351.14"/>
</dbReference>
<dbReference type="GeneID" id="65109"/>
<dbReference type="KEGG" id="hsa:65109"/>
<dbReference type="MANE-Select" id="ENST00000276201.7">
    <property type="protein sequence ID" value="ENSP00000276201.3"/>
    <property type="RefSeq nucleotide sequence ID" value="NM_080632.3"/>
    <property type="RefSeq protein sequence ID" value="NP_542199.1"/>
</dbReference>
<dbReference type="UCSC" id="uc004erz.3">
    <molecule id="Q9BZI7-1"/>
    <property type="organism name" value="human"/>
</dbReference>
<dbReference type="AGR" id="HGNC:20439"/>
<dbReference type="CTD" id="65109"/>
<dbReference type="DisGeNET" id="65109"/>
<dbReference type="GeneCards" id="UPF3B"/>
<dbReference type="HGNC" id="HGNC:20439">
    <property type="gene designation" value="UPF3B"/>
</dbReference>
<dbReference type="HPA" id="ENSG00000125351">
    <property type="expression patterns" value="Low tissue specificity"/>
</dbReference>
<dbReference type="MalaCards" id="UPF3B"/>
<dbReference type="MIM" id="300298">
    <property type="type" value="gene"/>
</dbReference>
<dbReference type="MIM" id="300676">
    <property type="type" value="phenotype"/>
</dbReference>
<dbReference type="neXtProt" id="NX_Q9BZI7"/>
<dbReference type="OpenTargets" id="ENSG00000125351"/>
<dbReference type="Orphanet" id="776">
    <property type="disease" value="Lujan-Fryns syndrome"/>
</dbReference>
<dbReference type="Orphanet" id="777">
    <property type="disease" value="X-linked non-syndromic intellectual disability"/>
</dbReference>
<dbReference type="PharmGKB" id="PA128394708"/>
<dbReference type="VEuPathDB" id="HostDB:ENSG00000125351"/>
<dbReference type="eggNOG" id="KOG1295">
    <property type="taxonomic scope" value="Eukaryota"/>
</dbReference>
<dbReference type="GeneTree" id="ENSGT00390000017146"/>
<dbReference type="HOGENOM" id="CLU_041202_1_0_1"/>
<dbReference type="InParanoid" id="Q9BZI7"/>
<dbReference type="OMA" id="EYHAMVE"/>
<dbReference type="OrthoDB" id="18087at2759"/>
<dbReference type="PAN-GO" id="Q9BZI7">
    <property type="GO annotations" value="5 GO annotations based on evolutionary models"/>
</dbReference>
<dbReference type="PhylomeDB" id="Q9BZI7"/>
<dbReference type="TreeFam" id="TF316034"/>
<dbReference type="PathwayCommons" id="Q9BZI7"/>
<dbReference type="Reactome" id="R-HSA-159236">
    <property type="pathway name" value="Transport of Mature mRNA derived from an Intron-Containing Transcript"/>
</dbReference>
<dbReference type="Reactome" id="R-HSA-72163">
    <property type="pathway name" value="mRNA Splicing - Major Pathway"/>
</dbReference>
<dbReference type="Reactome" id="R-HSA-72187">
    <property type="pathway name" value="mRNA 3'-end processing"/>
</dbReference>
<dbReference type="Reactome" id="R-HSA-73856">
    <property type="pathway name" value="RNA Polymerase II Transcription Termination"/>
</dbReference>
<dbReference type="Reactome" id="R-HSA-9010553">
    <property type="pathway name" value="Regulation of expression of SLITs and ROBOs"/>
</dbReference>
<dbReference type="Reactome" id="R-HSA-975957">
    <property type="pathway name" value="Nonsense Mediated Decay (NMD) enhanced by the Exon Junction Complex (EJC)"/>
</dbReference>
<dbReference type="SignaLink" id="Q9BZI7"/>
<dbReference type="SIGNOR" id="Q9BZI7"/>
<dbReference type="BioGRID-ORCS" id="65109">
    <property type="hits" value="29 hits in 798 CRISPR screens"/>
</dbReference>
<dbReference type="CD-CODE" id="91857CE7">
    <property type="entry name" value="Nucleolus"/>
</dbReference>
<dbReference type="CD-CODE" id="DEE660B4">
    <property type="entry name" value="Stress granule"/>
</dbReference>
<dbReference type="EvolutionaryTrace" id="Q9BZI7"/>
<dbReference type="GeneWiki" id="UPF3B"/>
<dbReference type="GenomeRNAi" id="65109"/>
<dbReference type="Pharos" id="Q9BZI7">
    <property type="development level" value="Tbio"/>
</dbReference>
<dbReference type="PRO" id="PR:Q9BZI7"/>
<dbReference type="Proteomes" id="UP000005640">
    <property type="component" value="Chromosome X"/>
</dbReference>
<dbReference type="RNAct" id="Q9BZI7">
    <property type="molecule type" value="protein"/>
</dbReference>
<dbReference type="Bgee" id="ENSG00000125351">
    <property type="expression patterns" value="Expressed in sural nerve and 188 other cell types or tissues"/>
</dbReference>
<dbReference type="ExpressionAtlas" id="Q9BZI7">
    <property type="expression patterns" value="baseline and differential"/>
</dbReference>
<dbReference type="GO" id="GO:0034451">
    <property type="term" value="C:centriolar satellite"/>
    <property type="evidence" value="ECO:0000314"/>
    <property type="project" value="HPA"/>
</dbReference>
<dbReference type="GO" id="GO:0005737">
    <property type="term" value="C:cytoplasm"/>
    <property type="evidence" value="ECO:0000318"/>
    <property type="project" value="GO_Central"/>
</dbReference>
<dbReference type="GO" id="GO:0005829">
    <property type="term" value="C:cytosol"/>
    <property type="evidence" value="ECO:0000314"/>
    <property type="project" value="HPA"/>
</dbReference>
<dbReference type="GO" id="GO:0035145">
    <property type="term" value="C:exon-exon junction complex"/>
    <property type="evidence" value="ECO:0000314"/>
    <property type="project" value="UniProtKB"/>
</dbReference>
<dbReference type="GO" id="GO:0043025">
    <property type="term" value="C:neuronal cell body"/>
    <property type="evidence" value="ECO:0007669"/>
    <property type="project" value="Ensembl"/>
</dbReference>
<dbReference type="GO" id="GO:0005730">
    <property type="term" value="C:nucleolus"/>
    <property type="evidence" value="ECO:0000314"/>
    <property type="project" value="HPA"/>
</dbReference>
<dbReference type="GO" id="GO:0005654">
    <property type="term" value="C:nucleoplasm"/>
    <property type="evidence" value="ECO:0000314"/>
    <property type="project" value="HPA"/>
</dbReference>
<dbReference type="GO" id="GO:0005634">
    <property type="term" value="C:nucleus"/>
    <property type="evidence" value="ECO:0000303"/>
    <property type="project" value="UniProtKB"/>
</dbReference>
<dbReference type="GO" id="GO:0003729">
    <property type="term" value="F:mRNA binding"/>
    <property type="evidence" value="ECO:0000314"/>
    <property type="project" value="UniProtKB"/>
</dbReference>
<dbReference type="GO" id="GO:0003723">
    <property type="term" value="F:RNA binding"/>
    <property type="evidence" value="ECO:0007005"/>
    <property type="project" value="UniProtKB"/>
</dbReference>
<dbReference type="GO" id="GO:0007420">
    <property type="term" value="P:brain development"/>
    <property type="evidence" value="ECO:0007669"/>
    <property type="project" value="Ensembl"/>
</dbReference>
<dbReference type="GO" id="GO:0051028">
    <property type="term" value="P:mRNA transport"/>
    <property type="evidence" value="ECO:0007669"/>
    <property type="project" value="UniProtKB-KW"/>
</dbReference>
<dbReference type="GO" id="GO:0031175">
    <property type="term" value="P:neuron projection development"/>
    <property type="evidence" value="ECO:0007669"/>
    <property type="project" value="Ensembl"/>
</dbReference>
<dbReference type="GO" id="GO:0000184">
    <property type="term" value="P:nuclear-transcribed mRNA catabolic process, nonsense-mediated decay"/>
    <property type="evidence" value="ECO:0000314"/>
    <property type="project" value="UniProtKB"/>
</dbReference>
<dbReference type="GO" id="GO:1905746">
    <property type="term" value="P:positive regulation of mRNA cis splicing, via spliceosome"/>
    <property type="evidence" value="ECO:0007669"/>
    <property type="project" value="Ensembl"/>
</dbReference>
<dbReference type="GO" id="GO:0045666">
    <property type="term" value="P:positive regulation of neuron differentiation"/>
    <property type="evidence" value="ECO:0007669"/>
    <property type="project" value="Ensembl"/>
</dbReference>
<dbReference type="GO" id="GO:0045727">
    <property type="term" value="P:positive regulation of translation"/>
    <property type="evidence" value="ECO:0000314"/>
    <property type="project" value="UniProtKB"/>
</dbReference>
<dbReference type="CDD" id="cd12728">
    <property type="entry name" value="RRM_like_Smg4_UPF3B"/>
    <property type="match status" value="1"/>
</dbReference>
<dbReference type="FunFam" id="3.30.70.330:FF:000067">
    <property type="entry name" value="regulator of nonsense transcripts 3A isoform X2"/>
    <property type="match status" value="1"/>
</dbReference>
<dbReference type="Gene3D" id="3.30.70.330">
    <property type="match status" value="1"/>
</dbReference>
<dbReference type="IDEAL" id="IID00251"/>
<dbReference type="InterPro" id="IPR012677">
    <property type="entry name" value="Nucleotide-bd_a/b_plait_sf"/>
</dbReference>
<dbReference type="InterPro" id="IPR035979">
    <property type="entry name" value="RBD_domain_sf"/>
</dbReference>
<dbReference type="InterPro" id="IPR039722">
    <property type="entry name" value="Upf3"/>
</dbReference>
<dbReference type="InterPro" id="IPR005120">
    <property type="entry name" value="UPF3_dom"/>
</dbReference>
<dbReference type="InterPro" id="IPR034979">
    <property type="entry name" value="UPF3B_RRM-like"/>
</dbReference>
<dbReference type="PANTHER" id="PTHR13112:SF1">
    <property type="entry name" value="REGULATOR OF NONSENSE TRANSCRIPTS 3B"/>
    <property type="match status" value="1"/>
</dbReference>
<dbReference type="PANTHER" id="PTHR13112">
    <property type="entry name" value="UPF3 REGULATOR OF NONSENSE TRANSCRIPTS-LIKE PROTEIN"/>
    <property type="match status" value="1"/>
</dbReference>
<dbReference type="Pfam" id="PF03467">
    <property type="entry name" value="Smg4_UPF3"/>
    <property type="match status" value="1"/>
</dbReference>
<dbReference type="SUPFAM" id="SSF54928">
    <property type="entry name" value="RNA-binding domain, RBD"/>
    <property type="match status" value="1"/>
</dbReference>
<feature type="chain" id="PRO_0000215297" description="Regulator of nonsense transcripts 3B">
    <location>
        <begin position="1"/>
        <end position="483"/>
    </location>
</feature>
<feature type="region of interest" description="Disordered" evidence="2">
    <location>
        <begin position="1"/>
        <end position="51"/>
    </location>
</feature>
<feature type="region of interest" description="Necessary for interaction with UPF2">
    <location>
        <begin position="30"/>
        <end position="255"/>
    </location>
</feature>
<feature type="region of interest" description="Binds to UPF2">
    <location>
        <begin position="52"/>
        <end position="57"/>
    </location>
</feature>
<feature type="region of interest" description="Disordered" evidence="2">
    <location>
        <begin position="206"/>
        <end position="483"/>
    </location>
</feature>
<feature type="region of interest" description="Sufficient for association with EJC core" evidence="15">
    <location>
        <begin position="424"/>
        <end position="483"/>
    </location>
</feature>
<feature type="region of interest" description="Necessary for interaction with RBM8A and for activating NMD">
    <location>
        <begin position="430"/>
        <end position="447"/>
    </location>
</feature>
<feature type="compositionally biased region" description="Basic and acidic residues" evidence="2">
    <location>
        <begin position="1"/>
        <end position="14"/>
    </location>
</feature>
<feature type="compositionally biased region" description="Basic and acidic residues" evidence="2">
    <location>
        <begin position="34"/>
        <end position="50"/>
    </location>
</feature>
<feature type="compositionally biased region" description="Basic and acidic residues" evidence="2">
    <location>
        <begin position="209"/>
        <end position="268"/>
    </location>
</feature>
<feature type="compositionally biased region" description="Basic and acidic residues" evidence="2">
    <location>
        <begin position="285"/>
        <end position="314"/>
    </location>
</feature>
<feature type="compositionally biased region" description="Basic and acidic residues" evidence="2">
    <location>
        <begin position="323"/>
        <end position="409"/>
    </location>
</feature>
<feature type="compositionally biased region" description="Basic and acidic residues" evidence="2">
    <location>
        <begin position="417"/>
        <end position="437"/>
    </location>
</feature>
<feature type="compositionally biased region" description="Basic and acidic residues" evidence="2">
    <location>
        <begin position="457"/>
        <end position="483"/>
    </location>
</feature>
<feature type="modified residue" description="Phosphothreonine" evidence="21 22 24 25">
    <location>
        <position position="169"/>
    </location>
</feature>
<feature type="modified residue" description="Phosphothreonine" evidence="23">
    <location>
        <position position="198"/>
    </location>
</feature>
<feature type="modified residue" description="Phosphoserine" evidence="24 25">
    <location>
        <position position="310"/>
    </location>
</feature>
<feature type="modified residue" description="Omega-N-methylarginine" evidence="26">
    <location>
        <position position="447"/>
    </location>
</feature>
<feature type="splice variant" id="VSP_012963" description="In isoform 2." evidence="17 18">
    <location>
        <begin position="270"/>
        <end position="282"/>
    </location>
</feature>
<feature type="sequence variant" id="VAR_037666" description="In MRXS14; dbSNP:rs122468182." evidence="12">
    <original>Y</original>
    <variation>D</variation>
    <location>
        <position position="160"/>
    </location>
</feature>
<feature type="mutagenesis site" description="Abolishes interaction with UPF2." evidence="9">
    <original>K</original>
    <variation>E</variation>
    <location>
        <position position="52"/>
    </location>
</feature>
<feature type="mutagenesis site" description="Abolishes interaction with UPF2." evidence="3">
    <original>VVIRRL</original>
    <variation>AVARRA</variation>
    <location>
        <begin position="53"/>
        <end position="58"/>
    </location>
</feature>
<feature type="mutagenesis site" description="Does not abolish interaction with UPF2." evidence="9">
    <original>R</original>
    <variation>E</variation>
    <location>
        <position position="56"/>
    </location>
</feature>
<feature type="mutagenesis site" description="Abolishes interaction with UPF2." evidence="3">
    <original>YVF</original>
    <variation>DVD</variation>
    <location>
        <begin position="117"/>
        <end position="119"/>
    </location>
</feature>
<feature type="mutagenesis site" description="Reduces NMD." evidence="8">
    <original>R</original>
    <variation>A</variation>
    <location>
        <position position="430"/>
    </location>
</feature>
<feature type="mutagenesis site" description="Reduces NMD." evidence="8 11">
    <original>R</original>
    <variation>A</variation>
    <location>
        <position position="432"/>
    </location>
</feature>
<feature type="mutagenesis site" description="Abolishes NMD." evidence="8">
    <location>
        <begin position="434"/>
        <end position="447"/>
    </location>
</feature>
<feature type="mutagenesis site" description="Reduces NMD." evidence="8">
    <original>K</original>
    <variation>A</variation>
    <location>
        <position position="434"/>
    </location>
</feature>
<feature type="mutagenesis site" description="Reduces NMD." evidence="8">
    <original>D</original>
    <variation>A</variation>
    <location>
        <position position="435"/>
    </location>
</feature>
<feature type="mutagenesis site" description="Impairs association with EJC." evidence="8 15">
    <original>R</original>
    <variation>A</variation>
    <location>
        <position position="436"/>
    </location>
</feature>
<feature type="mutagenesis site" description="Reduces NMD." evidence="8 15">
    <original>R</original>
    <variation>A</variation>
    <location>
        <position position="436"/>
    </location>
</feature>
<feature type="mutagenesis site" description="Reduces NMD." evidence="8">
    <original>L</original>
    <variation>F</variation>
    <location>
        <position position="441"/>
    </location>
</feature>
<feature type="mutagenesis site" description="Impairs association with EJC." evidence="15">
    <original>Y</original>
    <variation>A</variation>
    <location>
        <position position="442"/>
    </location>
</feature>
<feature type="mutagenesis site" description="Abolishes NMD; when associated with E-449 and E-451." evidence="15">
    <original>R</original>
    <variation>E</variation>
    <location>
        <position position="447"/>
    </location>
</feature>
<feature type="mutagenesis site" description="Abolishes NMD; when associated with E-447 and E-451." evidence="15">
    <original>R</original>
    <variation>E</variation>
    <location>
        <position position="449"/>
    </location>
</feature>
<feature type="mutagenesis site" description="Abolishes NMD; when associated with E-447 and E-449." evidence="15">
    <original>R</original>
    <variation>E</variation>
    <location>
        <position position="451"/>
    </location>
</feature>
<feature type="sequence conflict" description="In Ref. 4; AAI21018." evidence="19" ref="4">
    <original>R</original>
    <variation>H</variation>
    <location>
        <position position="358"/>
    </location>
</feature>
<feature type="strand" evidence="27">
    <location>
        <begin position="52"/>
        <end position="58"/>
    </location>
</feature>
<feature type="helix" evidence="27">
    <location>
        <begin position="64"/>
        <end position="71"/>
    </location>
</feature>
<feature type="strand" evidence="27">
    <location>
        <begin position="77"/>
        <end position="85"/>
    </location>
</feature>
<feature type="strand" evidence="27">
    <location>
        <begin position="95"/>
        <end position="104"/>
    </location>
</feature>
<feature type="helix" evidence="27">
    <location>
        <begin position="105"/>
        <end position="114"/>
    </location>
</feature>
<feature type="strand" evidence="27">
    <location>
        <begin position="118"/>
        <end position="120"/>
    </location>
</feature>
<feature type="strand" evidence="27">
    <location>
        <begin position="126"/>
        <end position="128"/>
    </location>
</feature>
<feature type="strand" evidence="27">
    <location>
        <begin position="130"/>
        <end position="133"/>
    </location>
</feature>
<feature type="turn" evidence="29">
    <location>
        <begin position="149"/>
        <end position="152"/>
    </location>
</feature>
<feature type="helix" evidence="29">
    <location>
        <begin position="154"/>
        <end position="156"/>
    </location>
</feature>
<feature type="helix" evidence="29">
    <location>
        <begin position="158"/>
        <end position="166"/>
    </location>
</feature>
<feature type="turn" evidence="28">
    <location>
        <begin position="433"/>
        <end position="435"/>
    </location>
</feature>
<proteinExistence type="evidence at protein level"/>
<organism>
    <name type="scientific">Homo sapiens</name>
    <name type="common">Human</name>
    <dbReference type="NCBI Taxonomy" id="9606"/>
    <lineage>
        <taxon>Eukaryota</taxon>
        <taxon>Metazoa</taxon>
        <taxon>Chordata</taxon>
        <taxon>Craniata</taxon>
        <taxon>Vertebrata</taxon>
        <taxon>Euteleostomi</taxon>
        <taxon>Mammalia</taxon>
        <taxon>Eutheria</taxon>
        <taxon>Euarchontoglires</taxon>
        <taxon>Primates</taxon>
        <taxon>Haplorrhini</taxon>
        <taxon>Catarrhini</taxon>
        <taxon>Hominidae</taxon>
        <taxon>Homo</taxon>
    </lineage>
</organism>